<feature type="chain" id="PRO_0000374998" description="Ribosomal protein uS12 methylthiotransferase RimO">
    <location>
        <begin position="1"/>
        <end position="441"/>
    </location>
</feature>
<feature type="domain" description="MTTase N-terminal" evidence="1">
    <location>
        <begin position="8"/>
        <end position="118"/>
    </location>
</feature>
<feature type="domain" description="Radical SAM core" evidence="2">
    <location>
        <begin position="136"/>
        <end position="373"/>
    </location>
</feature>
<feature type="domain" description="TRAM" evidence="1">
    <location>
        <begin position="376"/>
        <end position="441"/>
    </location>
</feature>
<feature type="binding site" evidence="1">
    <location>
        <position position="17"/>
    </location>
    <ligand>
        <name>[4Fe-4S] cluster</name>
        <dbReference type="ChEBI" id="CHEBI:49883"/>
        <label>1</label>
    </ligand>
</feature>
<feature type="binding site" evidence="1">
    <location>
        <position position="53"/>
    </location>
    <ligand>
        <name>[4Fe-4S] cluster</name>
        <dbReference type="ChEBI" id="CHEBI:49883"/>
        <label>1</label>
    </ligand>
</feature>
<feature type="binding site" evidence="1">
    <location>
        <position position="82"/>
    </location>
    <ligand>
        <name>[4Fe-4S] cluster</name>
        <dbReference type="ChEBI" id="CHEBI:49883"/>
        <label>1</label>
    </ligand>
</feature>
<feature type="binding site" evidence="1">
    <location>
        <position position="150"/>
    </location>
    <ligand>
        <name>[4Fe-4S] cluster</name>
        <dbReference type="ChEBI" id="CHEBI:49883"/>
        <label>2</label>
        <note>4Fe-4S-S-AdoMet</note>
    </ligand>
</feature>
<feature type="binding site" evidence="1">
    <location>
        <position position="154"/>
    </location>
    <ligand>
        <name>[4Fe-4S] cluster</name>
        <dbReference type="ChEBI" id="CHEBI:49883"/>
        <label>2</label>
        <note>4Fe-4S-S-AdoMet</note>
    </ligand>
</feature>
<feature type="binding site" evidence="1">
    <location>
        <position position="157"/>
    </location>
    <ligand>
        <name>[4Fe-4S] cluster</name>
        <dbReference type="ChEBI" id="CHEBI:49883"/>
        <label>2</label>
        <note>4Fe-4S-S-AdoMet</note>
    </ligand>
</feature>
<evidence type="ECO:0000255" key="1">
    <source>
        <dbReference type="HAMAP-Rule" id="MF_01865"/>
    </source>
</evidence>
<evidence type="ECO:0000255" key="2">
    <source>
        <dbReference type="PROSITE-ProRule" id="PRU01266"/>
    </source>
</evidence>
<organism>
    <name type="scientific">Salmonella typhimurium (strain LT2 / SGSC1412 / ATCC 700720)</name>
    <dbReference type="NCBI Taxonomy" id="99287"/>
    <lineage>
        <taxon>Bacteria</taxon>
        <taxon>Pseudomonadati</taxon>
        <taxon>Pseudomonadota</taxon>
        <taxon>Gammaproteobacteria</taxon>
        <taxon>Enterobacterales</taxon>
        <taxon>Enterobacteriaceae</taxon>
        <taxon>Salmonella</taxon>
    </lineage>
</organism>
<keyword id="KW-0004">4Fe-4S</keyword>
<keyword id="KW-0963">Cytoplasm</keyword>
<keyword id="KW-0408">Iron</keyword>
<keyword id="KW-0411">Iron-sulfur</keyword>
<keyword id="KW-0479">Metal-binding</keyword>
<keyword id="KW-1185">Reference proteome</keyword>
<keyword id="KW-0949">S-adenosyl-L-methionine</keyword>
<keyword id="KW-0808">Transferase</keyword>
<accession>Q8ZQM1</accession>
<protein>
    <recommendedName>
        <fullName evidence="1">Ribosomal protein uS12 methylthiotransferase RimO</fullName>
        <shortName evidence="1">uS12 MTTase</shortName>
        <shortName evidence="1">uS12 methylthiotransferase</shortName>
        <ecNumber evidence="1">2.8.4.4</ecNumber>
    </recommendedName>
    <alternativeName>
        <fullName evidence="1">Ribosomal protein uS12 (aspartate-C(3))-methylthiotransferase</fullName>
    </alternativeName>
    <alternativeName>
        <fullName evidence="1">Ribosome maturation factor RimO</fullName>
    </alternativeName>
</protein>
<name>RIMO_SALTY</name>
<dbReference type="EC" id="2.8.4.4" evidence="1"/>
<dbReference type="EMBL" id="AE006468">
    <property type="protein sequence ID" value="AAL19788.1"/>
    <property type="molecule type" value="Genomic_DNA"/>
</dbReference>
<dbReference type="RefSeq" id="WP_000073317.1">
    <property type="nucleotide sequence ID" value="NC_003197.2"/>
</dbReference>
<dbReference type="SMR" id="Q8ZQM1"/>
<dbReference type="STRING" id="99287.STM0852"/>
<dbReference type="PaxDb" id="99287-STM0852"/>
<dbReference type="KEGG" id="stm:STM0852"/>
<dbReference type="PATRIC" id="fig|99287.12.peg.890"/>
<dbReference type="HOGENOM" id="CLU_018697_0_0_6"/>
<dbReference type="PhylomeDB" id="Q8ZQM1"/>
<dbReference type="BioCyc" id="SENT99287:STM0852-MONOMER"/>
<dbReference type="Proteomes" id="UP000001014">
    <property type="component" value="Chromosome"/>
</dbReference>
<dbReference type="GO" id="GO:0005829">
    <property type="term" value="C:cytosol"/>
    <property type="evidence" value="ECO:0000318"/>
    <property type="project" value="GO_Central"/>
</dbReference>
<dbReference type="GO" id="GO:0051539">
    <property type="term" value="F:4 iron, 4 sulfur cluster binding"/>
    <property type="evidence" value="ECO:0000318"/>
    <property type="project" value="GO_Central"/>
</dbReference>
<dbReference type="GO" id="GO:0035599">
    <property type="term" value="F:aspartic acid methylthiotransferase activity"/>
    <property type="evidence" value="ECO:0000318"/>
    <property type="project" value="GO_Central"/>
</dbReference>
<dbReference type="GO" id="GO:0046872">
    <property type="term" value="F:metal ion binding"/>
    <property type="evidence" value="ECO:0007669"/>
    <property type="project" value="UniProtKB-KW"/>
</dbReference>
<dbReference type="GO" id="GO:0103039">
    <property type="term" value="F:protein methylthiotransferase activity"/>
    <property type="evidence" value="ECO:0007669"/>
    <property type="project" value="UniProtKB-EC"/>
</dbReference>
<dbReference type="GO" id="GO:0006400">
    <property type="term" value="P:tRNA modification"/>
    <property type="evidence" value="ECO:0007669"/>
    <property type="project" value="InterPro"/>
</dbReference>
<dbReference type="CDD" id="cd01335">
    <property type="entry name" value="Radical_SAM"/>
    <property type="match status" value="1"/>
</dbReference>
<dbReference type="FunFam" id="2.40.50.140:FF:000060">
    <property type="entry name" value="Ribosomal protein S12 methylthiotransferase RimO"/>
    <property type="match status" value="1"/>
</dbReference>
<dbReference type="FunFam" id="3.40.50.12160:FF:000002">
    <property type="entry name" value="Ribosomal protein S12 methylthiotransferase RimO"/>
    <property type="match status" value="1"/>
</dbReference>
<dbReference type="FunFam" id="3.80.30.20:FF:000001">
    <property type="entry name" value="tRNA-2-methylthio-N(6)-dimethylallyladenosine synthase 2"/>
    <property type="match status" value="1"/>
</dbReference>
<dbReference type="Gene3D" id="3.40.50.12160">
    <property type="entry name" value="Methylthiotransferase, N-terminal domain"/>
    <property type="match status" value="1"/>
</dbReference>
<dbReference type="Gene3D" id="2.40.50.140">
    <property type="entry name" value="Nucleic acid-binding proteins"/>
    <property type="match status" value="1"/>
</dbReference>
<dbReference type="Gene3D" id="3.80.30.20">
    <property type="entry name" value="tm_1862 like domain"/>
    <property type="match status" value="1"/>
</dbReference>
<dbReference type="HAMAP" id="MF_01865">
    <property type="entry name" value="MTTase_RimO"/>
    <property type="match status" value="1"/>
</dbReference>
<dbReference type="InterPro" id="IPR006638">
    <property type="entry name" value="Elp3/MiaA/NifB-like_rSAM"/>
</dbReference>
<dbReference type="InterPro" id="IPR005839">
    <property type="entry name" value="Methylthiotransferase"/>
</dbReference>
<dbReference type="InterPro" id="IPR020612">
    <property type="entry name" value="Methylthiotransferase_CS"/>
</dbReference>
<dbReference type="InterPro" id="IPR013848">
    <property type="entry name" value="Methylthiotransferase_N"/>
</dbReference>
<dbReference type="InterPro" id="IPR038135">
    <property type="entry name" value="Methylthiotransferase_N_sf"/>
</dbReference>
<dbReference type="InterPro" id="IPR012340">
    <property type="entry name" value="NA-bd_OB-fold"/>
</dbReference>
<dbReference type="InterPro" id="IPR005840">
    <property type="entry name" value="Ribosomal_uS12_MeSTrfase_RimO"/>
</dbReference>
<dbReference type="InterPro" id="IPR007197">
    <property type="entry name" value="rSAM"/>
</dbReference>
<dbReference type="InterPro" id="IPR023404">
    <property type="entry name" value="rSAM_horseshoe"/>
</dbReference>
<dbReference type="InterPro" id="IPR002792">
    <property type="entry name" value="TRAM_dom"/>
</dbReference>
<dbReference type="NCBIfam" id="TIGR01125">
    <property type="entry name" value="30S ribosomal protein S12 methylthiotransferase RimO"/>
    <property type="match status" value="1"/>
</dbReference>
<dbReference type="NCBIfam" id="TIGR00089">
    <property type="entry name" value="MiaB/RimO family radical SAM methylthiotransferase"/>
    <property type="match status" value="1"/>
</dbReference>
<dbReference type="PANTHER" id="PTHR43837">
    <property type="entry name" value="RIBOSOMAL PROTEIN S12 METHYLTHIOTRANSFERASE RIMO"/>
    <property type="match status" value="1"/>
</dbReference>
<dbReference type="PANTHER" id="PTHR43837:SF1">
    <property type="entry name" value="RIBOSOMAL PROTEIN US12 METHYLTHIOTRANSFERASE RIMO"/>
    <property type="match status" value="1"/>
</dbReference>
<dbReference type="Pfam" id="PF04055">
    <property type="entry name" value="Radical_SAM"/>
    <property type="match status" value="1"/>
</dbReference>
<dbReference type="Pfam" id="PF18693">
    <property type="entry name" value="TRAM_2"/>
    <property type="match status" value="1"/>
</dbReference>
<dbReference type="Pfam" id="PF00919">
    <property type="entry name" value="UPF0004"/>
    <property type="match status" value="1"/>
</dbReference>
<dbReference type="SFLD" id="SFLDG01082">
    <property type="entry name" value="B12-binding_domain_containing"/>
    <property type="match status" value="1"/>
</dbReference>
<dbReference type="SFLD" id="SFLDG01061">
    <property type="entry name" value="methylthiotransferase"/>
    <property type="match status" value="1"/>
</dbReference>
<dbReference type="SFLD" id="SFLDF00274">
    <property type="entry name" value="ribosomal_protein_S12_methylth"/>
    <property type="match status" value="1"/>
</dbReference>
<dbReference type="SMART" id="SM00729">
    <property type="entry name" value="Elp3"/>
    <property type="match status" value="1"/>
</dbReference>
<dbReference type="SUPFAM" id="SSF102114">
    <property type="entry name" value="Radical SAM enzymes"/>
    <property type="match status" value="1"/>
</dbReference>
<dbReference type="PROSITE" id="PS51449">
    <property type="entry name" value="MTTASE_N"/>
    <property type="match status" value="1"/>
</dbReference>
<dbReference type="PROSITE" id="PS01278">
    <property type="entry name" value="MTTASE_RADICAL"/>
    <property type="match status" value="1"/>
</dbReference>
<dbReference type="PROSITE" id="PS51918">
    <property type="entry name" value="RADICAL_SAM"/>
    <property type="match status" value="1"/>
</dbReference>
<dbReference type="PROSITE" id="PS50926">
    <property type="entry name" value="TRAM"/>
    <property type="match status" value="1"/>
</dbReference>
<sequence>MSNVTHQPKIGFVSLGCPKNLVDSERILTELRTEGYDVVPRYDDADMVIVNTCGFIDSAVQESLEAIGEALNENGKVIVTGCLGAKEDQIREVHPKVLEITGPHSYEQVLQHVHHYVPKPKHNPFLSLVPEQGVKLTPRHYAYLKISEGCNHRCTFCIIPSMRGDLVSRPIGDVLSEAKRLVDAGVKEILVISQDTSAYGVDVKHRTGFHNGEPVKTSMVSLCEQLSKLGVWTRLHYVYPYPHVDDVIPLMAEGKILPYLDIPLQHASPRILKLMKRPGSVDRQLARIKQWREICPELTLRSTFIVGFPGETEEDFQMLLDFLKEARLDRVGCFKYSPVEGAGANELPDQVPEEVKEERWNRFMQLQQQISAERLQEKVGREILVIVDEVDEEGAIGRSMADAPEIDGAVYLNGETNVKPGDIVRVKVENADEYDLWGSRV</sequence>
<reference key="1">
    <citation type="journal article" date="2001" name="Nature">
        <title>Complete genome sequence of Salmonella enterica serovar Typhimurium LT2.</title>
        <authorList>
            <person name="McClelland M."/>
            <person name="Sanderson K.E."/>
            <person name="Spieth J."/>
            <person name="Clifton S.W."/>
            <person name="Latreille P."/>
            <person name="Courtney L."/>
            <person name="Porwollik S."/>
            <person name="Ali J."/>
            <person name="Dante M."/>
            <person name="Du F."/>
            <person name="Hou S."/>
            <person name="Layman D."/>
            <person name="Leonard S."/>
            <person name="Nguyen C."/>
            <person name="Scott K."/>
            <person name="Holmes A."/>
            <person name="Grewal N."/>
            <person name="Mulvaney E."/>
            <person name="Ryan E."/>
            <person name="Sun H."/>
            <person name="Florea L."/>
            <person name="Miller W."/>
            <person name="Stoneking T."/>
            <person name="Nhan M."/>
            <person name="Waterston R."/>
            <person name="Wilson R.K."/>
        </authorList>
    </citation>
    <scope>NUCLEOTIDE SEQUENCE [LARGE SCALE GENOMIC DNA]</scope>
    <source>
        <strain>LT2 / SGSC1412 / ATCC 700720</strain>
    </source>
</reference>
<comment type="function">
    <text evidence="1">Catalyzes the methylthiolation of an aspartic acid residue of ribosomal protein uS12.</text>
</comment>
<comment type="catalytic activity">
    <reaction evidence="1">
        <text>L-aspartate(89)-[ribosomal protein uS12]-hydrogen + (sulfur carrier)-SH + AH2 + 2 S-adenosyl-L-methionine = 3-methylsulfanyl-L-aspartate(89)-[ribosomal protein uS12]-hydrogen + (sulfur carrier)-H + 5'-deoxyadenosine + L-methionine + A + S-adenosyl-L-homocysteine + 2 H(+)</text>
        <dbReference type="Rhea" id="RHEA:37087"/>
        <dbReference type="Rhea" id="RHEA-COMP:10460"/>
        <dbReference type="Rhea" id="RHEA-COMP:10461"/>
        <dbReference type="Rhea" id="RHEA-COMP:14737"/>
        <dbReference type="Rhea" id="RHEA-COMP:14739"/>
        <dbReference type="ChEBI" id="CHEBI:13193"/>
        <dbReference type="ChEBI" id="CHEBI:15378"/>
        <dbReference type="ChEBI" id="CHEBI:17319"/>
        <dbReference type="ChEBI" id="CHEBI:17499"/>
        <dbReference type="ChEBI" id="CHEBI:29917"/>
        <dbReference type="ChEBI" id="CHEBI:29961"/>
        <dbReference type="ChEBI" id="CHEBI:57844"/>
        <dbReference type="ChEBI" id="CHEBI:57856"/>
        <dbReference type="ChEBI" id="CHEBI:59789"/>
        <dbReference type="ChEBI" id="CHEBI:64428"/>
        <dbReference type="ChEBI" id="CHEBI:73599"/>
        <dbReference type="EC" id="2.8.4.4"/>
    </reaction>
</comment>
<comment type="cofactor">
    <cofactor evidence="1">
        <name>[4Fe-4S] cluster</name>
        <dbReference type="ChEBI" id="CHEBI:49883"/>
    </cofactor>
    <text evidence="1">Binds 2 [4Fe-4S] clusters. One cluster is coordinated with 3 cysteines and an exchangeable S-adenosyl-L-methionine.</text>
</comment>
<comment type="subcellular location">
    <subcellularLocation>
        <location evidence="1">Cytoplasm</location>
    </subcellularLocation>
</comment>
<comment type="similarity">
    <text evidence="1">Belongs to the methylthiotransferase family. RimO subfamily.</text>
</comment>
<proteinExistence type="inferred from homology"/>
<gene>
    <name evidence="1" type="primary">rimO</name>
    <name type="ordered locus">STM0852</name>
</gene>